<feature type="chain" id="PRO_0000134762" description="6,7-dimethyl-8-ribityllumazine synthase">
    <location>
        <begin position="1"/>
        <end position="156"/>
    </location>
</feature>
<feature type="active site" description="Proton donor" evidence="1">
    <location>
        <position position="89"/>
    </location>
</feature>
<feature type="binding site" evidence="1">
    <location>
        <position position="23"/>
    </location>
    <ligand>
        <name>5-amino-6-(D-ribitylamino)uracil</name>
        <dbReference type="ChEBI" id="CHEBI:15934"/>
    </ligand>
</feature>
<feature type="binding site" evidence="1">
    <location>
        <begin position="57"/>
        <end position="59"/>
    </location>
    <ligand>
        <name>5-amino-6-(D-ribitylamino)uracil</name>
        <dbReference type="ChEBI" id="CHEBI:15934"/>
    </ligand>
</feature>
<feature type="binding site" evidence="1">
    <location>
        <begin position="81"/>
        <end position="83"/>
    </location>
    <ligand>
        <name>5-amino-6-(D-ribitylamino)uracil</name>
        <dbReference type="ChEBI" id="CHEBI:15934"/>
    </ligand>
</feature>
<feature type="binding site" evidence="1">
    <location>
        <begin position="86"/>
        <end position="87"/>
    </location>
    <ligand>
        <name>(2S)-2-hydroxy-3-oxobutyl phosphate</name>
        <dbReference type="ChEBI" id="CHEBI:58830"/>
    </ligand>
</feature>
<feature type="binding site" evidence="1">
    <location>
        <position position="114"/>
    </location>
    <ligand>
        <name>5-amino-6-(D-ribitylamino)uracil</name>
        <dbReference type="ChEBI" id="CHEBI:15934"/>
    </ligand>
</feature>
<feature type="binding site" evidence="1">
    <location>
        <position position="128"/>
    </location>
    <ligand>
        <name>(2S)-2-hydroxy-3-oxobutyl phosphate</name>
        <dbReference type="ChEBI" id="CHEBI:58830"/>
    </ligand>
</feature>
<dbReference type="EC" id="2.5.1.78" evidence="1"/>
<dbReference type="EMBL" id="AE017125">
    <property type="protein sequence ID" value="AAP76635.1"/>
    <property type="molecule type" value="Genomic_DNA"/>
</dbReference>
<dbReference type="RefSeq" id="WP_011114881.1">
    <property type="nucleotide sequence ID" value="NC_004917.1"/>
</dbReference>
<dbReference type="SMR" id="Q7VK54"/>
<dbReference type="STRING" id="235279.HH_0038"/>
<dbReference type="KEGG" id="hhe:HH_0038"/>
<dbReference type="eggNOG" id="COG0054">
    <property type="taxonomic scope" value="Bacteria"/>
</dbReference>
<dbReference type="HOGENOM" id="CLU_089358_1_1_7"/>
<dbReference type="OrthoDB" id="9809709at2"/>
<dbReference type="UniPathway" id="UPA00275">
    <property type="reaction ID" value="UER00404"/>
</dbReference>
<dbReference type="Proteomes" id="UP000002495">
    <property type="component" value="Chromosome"/>
</dbReference>
<dbReference type="GO" id="GO:0005829">
    <property type="term" value="C:cytosol"/>
    <property type="evidence" value="ECO:0007669"/>
    <property type="project" value="TreeGrafter"/>
</dbReference>
<dbReference type="GO" id="GO:0009349">
    <property type="term" value="C:riboflavin synthase complex"/>
    <property type="evidence" value="ECO:0007669"/>
    <property type="project" value="InterPro"/>
</dbReference>
<dbReference type="GO" id="GO:0000906">
    <property type="term" value="F:6,7-dimethyl-8-ribityllumazine synthase activity"/>
    <property type="evidence" value="ECO:0007669"/>
    <property type="project" value="UniProtKB-UniRule"/>
</dbReference>
<dbReference type="GO" id="GO:0009231">
    <property type="term" value="P:riboflavin biosynthetic process"/>
    <property type="evidence" value="ECO:0007669"/>
    <property type="project" value="UniProtKB-UniRule"/>
</dbReference>
<dbReference type="CDD" id="cd09209">
    <property type="entry name" value="Lumazine_synthase-I"/>
    <property type="match status" value="1"/>
</dbReference>
<dbReference type="FunFam" id="3.40.50.960:FF:000001">
    <property type="entry name" value="6,7-dimethyl-8-ribityllumazine synthase"/>
    <property type="match status" value="1"/>
</dbReference>
<dbReference type="Gene3D" id="3.40.50.960">
    <property type="entry name" value="Lumazine/riboflavin synthase"/>
    <property type="match status" value="1"/>
</dbReference>
<dbReference type="HAMAP" id="MF_00178">
    <property type="entry name" value="Lumazine_synth"/>
    <property type="match status" value="1"/>
</dbReference>
<dbReference type="InterPro" id="IPR034964">
    <property type="entry name" value="LS"/>
</dbReference>
<dbReference type="InterPro" id="IPR002180">
    <property type="entry name" value="LS/RS"/>
</dbReference>
<dbReference type="InterPro" id="IPR036467">
    <property type="entry name" value="LS/RS_sf"/>
</dbReference>
<dbReference type="NCBIfam" id="TIGR00114">
    <property type="entry name" value="lumazine-synth"/>
    <property type="match status" value="1"/>
</dbReference>
<dbReference type="PANTHER" id="PTHR21058:SF0">
    <property type="entry name" value="6,7-DIMETHYL-8-RIBITYLLUMAZINE SYNTHASE"/>
    <property type="match status" value="1"/>
</dbReference>
<dbReference type="PANTHER" id="PTHR21058">
    <property type="entry name" value="6,7-DIMETHYL-8-RIBITYLLUMAZINE SYNTHASE DMRL SYNTHASE LUMAZINE SYNTHASE"/>
    <property type="match status" value="1"/>
</dbReference>
<dbReference type="Pfam" id="PF00885">
    <property type="entry name" value="DMRL_synthase"/>
    <property type="match status" value="1"/>
</dbReference>
<dbReference type="SUPFAM" id="SSF52121">
    <property type="entry name" value="Lumazine synthase"/>
    <property type="match status" value="1"/>
</dbReference>
<sequence>MNIIEGKLQLIGDERIAIISSRFNHLITDRLVEGAKDCFVRHGGRDDLLDLVLVPGAYEIPFALQKILSQGEYDGICCLGAVIRGSTPHFDYVSAEATKGIANVTLKYGAPVTFGVLTTDSIEQAIERAGTKVGNKGFEAMASLIELINLYRKIGA</sequence>
<evidence type="ECO:0000255" key="1">
    <source>
        <dbReference type="HAMAP-Rule" id="MF_00178"/>
    </source>
</evidence>
<gene>
    <name evidence="1" type="primary">ribH</name>
    <name type="ordered locus">HH_0038</name>
</gene>
<name>RISB_HELHP</name>
<keyword id="KW-1185">Reference proteome</keyword>
<keyword id="KW-0686">Riboflavin biosynthesis</keyword>
<keyword id="KW-0808">Transferase</keyword>
<reference key="1">
    <citation type="journal article" date="2003" name="Proc. Natl. Acad. Sci. U.S.A.">
        <title>The complete genome sequence of the carcinogenic bacterium Helicobacter hepaticus.</title>
        <authorList>
            <person name="Suerbaum S."/>
            <person name="Josenhans C."/>
            <person name="Sterzenbach T."/>
            <person name="Drescher B."/>
            <person name="Brandt P."/>
            <person name="Bell M."/>
            <person name="Droege M."/>
            <person name="Fartmann B."/>
            <person name="Fischer H.-P."/>
            <person name="Ge Z."/>
            <person name="Hoerster A."/>
            <person name="Holland R."/>
            <person name="Klein K."/>
            <person name="Koenig J."/>
            <person name="Macko L."/>
            <person name="Mendz G.L."/>
            <person name="Nyakatura G."/>
            <person name="Schauer D.B."/>
            <person name="Shen Z."/>
            <person name="Weber J."/>
            <person name="Frosch M."/>
            <person name="Fox J.G."/>
        </authorList>
    </citation>
    <scope>NUCLEOTIDE SEQUENCE [LARGE SCALE GENOMIC DNA]</scope>
    <source>
        <strain>ATCC 51449 / 3B1</strain>
    </source>
</reference>
<accession>Q7VK54</accession>
<comment type="function">
    <text evidence="1">Catalyzes the formation of 6,7-dimethyl-8-ribityllumazine by condensation of 5-amino-6-(D-ribitylamino)uracil with 3,4-dihydroxy-2-butanone 4-phosphate. This is the penultimate step in the biosynthesis of riboflavin.</text>
</comment>
<comment type="catalytic activity">
    <reaction evidence="1">
        <text>(2S)-2-hydroxy-3-oxobutyl phosphate + 5-amino-6-(D-ribitylamino)uracil = 6,7-dimethyl-8-(1-D-ribityl)lumazine + phosphate + 2 H2O + H(+)</text>
        <dbReference type="Rhea" id="RHEA:26152"/>
        <dbReference type="ChEBI" id="CHEBI:15377"/>
        <dbReference type="ChEBI" id="CHEBI:15378"/>
        <dbReference type="ChEBI" id="CHEBI:15934"/>
        <dbReference type="ChEBI" id="CHEBI:43474"/>
        <dbReference type="ChEBI" id="CHEBI:58201"/>
        <dbReference type="ChEBI" id="CHEBI:58830"/>
        <dbReference type="EC" id="2.5.1.78"/>
    </reaction>
</comment>
<comment type="pathway">
    <text evidence="1">Cofactor biosynthesis; riboflavin biosynthesis; riboflavin from 2-hydroxy-3-oxobutyl phosphate and 5-amino-6-(D-ribitylamino)uracil: step 1/2.</text>
</comment>
<comment type="similarity">
    <text evidence="1">Belongs to the DMRL synthase family.</text>
</comment>
<protein>
    <recommendedName>
        <fullName evidence="1">6,7-dimethyl-8-ribityllumazine synthase</fullName>
        <shortName evidence="1">DMRL synthase</shortName>
        <shortName evidence="1">LS</shortName>
        <shortName evidence="1">Lumazine synthase</shortName>
        <ecNumber evidence="1">2.5.1.78</ecNumber>
    </recommendedName>
</protein>
<organism>
    <name type="scientific">Helicobacter hepaticus (strain ATCC 51449 / 3B1)</name>
    <dbReference type="NCBI Taxonomy" id="235279"/>
    <lineage>
        <taxon>Bacteria</taxon>
        <taxon>Pseudomonadati</taxon>
        <taxon>Campylobacterota</taxon>
        <taxon>Epsilonproteobacteria</taxon>
        <taxon>Campylobacterales</taxon>
        <taxon>Helicobacteraceae</taxon>
        <taxon>Helicobacter</taxon>
    </lineage>
</organism>
<proteinExistence type="inferred from homology"/>